<reference key="1">
    <citation type="journal article" date="2005" name="Arch. Microbiol.">
        <title>The genome sequence of an anaerobic aromatic-degrading denitrifying bacterium, strain EbN1.</title>
        <authorList>
            <person name="Rabus R."/>
            <person name="Kube M."/>
            <person name="Heider J."/>
            <person name="Beck A."/>
            <person name="Heitmann K."/>
            <person name="Widdel F."/>
            <person name="Reinhardt R."/>
        </authorList>
    </citation>
    <scope>NUCLEOTIDE SEQUENCE [LARGE SCALE GENOMIC DNA]</scope>
    <source>
        <strain>DSM 19018 / LMG 30748 / EbN1</strain>
    </source>
</reference>
<proteinExistence type="inferred from homology"/>
<feature type="chain" id="PRO_0000179483" description="ATP-dependent Clp protease proteolytic subunit">
    <location>
        <begin position="1"/>
        <end position="212"/>
    </location>
</feature>
<feature type="active site" description="Nucleophile" evidence="1">
    <location>
        <position position="114"/>
    </location>
</feature>
<feature type="active site" evidence="1">
    <location>
        <position position="139"/>
    </location>
</feature>
<accession>Q5P161</accession>
<evidence type="ECO:0000255" key="1">
    <source>
        <dbReference type="HAMAP-Rule" id="MF_00444"/>
    </source>
</evidence>
<dbReference type="EC" id="3.4.21.92" evidence="1"/>
<dbReference type="EMBL" id="CR555306">
    <property type="protein sequence ID" value="CAI08953.1"/>
    <property type="molecule type" value="Genomic_DNA"/>
</dbReference>
<dbReference type="RefSeq" id="WP_011238634.1">
    <property type="nucleotide sequence ID" value="NC_006513.1"/>
</dbReference>
<dbReference type="SMR" id="Q5P161"/>
<dbReference type="STRING" id="76114.ebA4970"/>
<dbReference type="MEROPS" id="S14.001"/>
<dbReference type="KEGG" id="eba:ebA4970"/>
<dbReference type="eggNOG" id="COG0740">
    <property type="taxonomic scope" value="Bacteria"/>
</dbReference>
<dbReference type="HOGENOM" id="CLU_058707_3_2_4"/>
<dbReference type="OrthoDB" id="9802800at2"/>
<dbReference type="Proteomes" id="UP000006552">
    <property type="component" value="Chromosome"/>
</dbReference>
<dbReference type="GO" id="GO:0005737">
    <property type="term" value="C:cytoplasm"/>
    <property type="evidence" value="ECO:0007669"/>
    <property type="project" value="UniProtKB-SubCell"/>
</dbReference>
<dbReference type="GO" id="GO:0009368">
    <property type="term" value="C:endopeptidase Clp complex"/>
    <property type="evidence" value="ECO:0007669"/>
    <property type="project" value="TreeGrafter"/>
</dbReference>
<dbReference type="GO" id="GO:0004176">
    <property type="term" value="F:ATP-dependent peptidase activity"/>
    <property type="evidence" value="ECO:0007669"/>
    <property type="project" value="InterPro"/>
</dbReference>
<dbReference type="GO" id="GO:0051117">
    <property type="term" value="F:ATPase binding"/>
    <property type="evidence" value="ECO:0007669"/>
    <property type="project" value="TreeGrafter"/>
</dbReference>
<dbReference type="GO" id="GO:0004252">
    <property type="term" value="F:serine-type endopeptidase activity"/>
    <property type="evidence" value="ECO:0007669"/>
    <property type="project" value="UniProtKB-UniRule"/>
</dbReference>
<dbReference type="GO" id="GO:0006515">
    <property type="term" value="P:protein quality control for misfolded or incompletely synthesized proteins"/>
    <property type="evidence" value="ECO:0007669"/>
    <property type="project" value="TreeGrafter"/>
</dbReference>
<dbReference type="CDD" id="cd07017">
    <property type="entry name" value="S14_ClpP_2"/>
    <property type="match status" value="1"/>
</dbReference>
<dbReference type="FunFam" id="3.90.226.10:FF:000001">
    <property type="entry name" value="ATP-dependent Clp protease proteolytic subunit"/>
    <property type="match status" value="1"/>
</dbReference>
<dbReference type="Gene3D" id="3.90.226.10">
    <property type="entry name" value="2-enoyl-CoA Hydratase, Chain A, domain 1"/>
    <property type="match status" value="1"/>
</dbReference>
<dbReference type="HAMAP" id="MF_00444">
    <property type="entry name" value="ClpP"/>
    <property type="match status" value="1"/>
</dbReference>
<dbReference type="InterPro" id="IPR001907">
    <property type="entry name" value="ClpP"/>
</dbReference>
<dbReference type="InterPro" id="IPR029045">
    <property type="entry name" value="ClpP/crotonase-like_dom_sf"/>
</dbReference>
<dbReference type="InterPro" id="IPR023562">
    <property type="entry name" value="ClpP/TepA"/>
</dbReference>
<dbReference type="InterPro" id="IPR033135">
    <property type="entry name" value="ClpP_His_AS"/>
</dbReference>
<dbReference type="InterPro" id="IPR018215">
    <property type="entry name" value="ClpP_Ser_AS"/>
</dbReference>
<dbReference type="NCBIfam" id="TIGR00493">
    <property type="entry name" value="clpP"/>
    <property type="match status" value="1"/>
</dbReference>
<dbReference type="NCBIfam" id="NF001368">
    <property type="entry name" value="PRK00277.1"/>
    <property type="match status" value="1"/>
</dbReference>
<dbReference type="NCBIfam" id="NF009205">
    <property type="entry name" value="PRK12553.1"/>
    <property type="match status" value="1"/>
</dbReference>
<dbReference type="PANTHER" id="PTHR10381">
    <property type="entry name" value="ATP-DEPENDENT CLP PROTEASE PROTEOLYTIC SUBUNIT"/>
    <property type="match status" value="1"/>
</dbReference>
<dbReference type="PANTHER" id="PTHR10381:SF70">
    <property type="entry name" value="ATP-DEPENDENT CLP PROTEASE PROTEOLYTIC SUBUNIT"/>
    <property type="match status" value="1"/>
</dbReference>
<dbReference type="Pfam" id="PF00574">
    <property type="entry name" value="CLP_protease"/>
    <property type="match status" value="1"/>
</dbReference>
<dbReference type="PRINTS" id="PR00127">
    <property type="entry name" value="CLPPROTEASEP"/>
</dbReference>
<dbReference type="SUPFAM" id="SSF52096">
    <property type="entry name" value="ClpP/crotonase"/>
    <property type="match status" value="1"/>
</dbReference>
<dbReference type="PROSITE" id="PS00382">
    <property type="entry name" value="CLP_PROTEASE_HIS"/>
    <property type="match status" value="1"/>
</dbReference>
<dbReference type="PROSITE" id="PS00381">
    <property type="entry name" value="CLP_PROTEASE_SER"/>
    <property type="match status" value="1"/>
</dbReference>
<keyword id="KW-0963">Cytoplasm</keyword>
<keyword id="KW-0378">Hydrolase</keyword>
<keyword id="KW-0645">Protease</keyword>
<keyword id="KW-1185">Reference proteome</keyword>
<keyword id="KW-0720">Serine protease</keyword>
<gene>
    <name evidence="1" type="primary">clpP</name>
    <name type="ordered locus">AZOSEA28280</name>
    <name type="ORF">ebA4970</name>
</gene>
<comment type="function">
    <text evidence="1">Cleaves peptides in various proteins in a process that requires ATP hydrolysis. Has a chymotrypsin-like activity. Plays a major role in the degradation of misfolded proteins.</text>
</comment>
<comment type="catalytic activity">
    <reaction evidence="1">
        <text>Hydrolysis of proteins to small peptides in the presence of ATP and magnesium. alpha-casein is the usual test substrate. In the absence of ATP, only oligopeptides shorter than five residues are hydrolyzed (such as succinyl-Leu-Tyr-|-NHMec, and Leu-Tyr-Leu-|-Tyr-Trp, in which cleavage of the -Tyr-|-Leu- and -Tyr-|-Trp bonds also occurs).</text>
        <dbReference type="EC" id="3.4.21.92"/>
    </reaction>
</comment>
<comment type="subunit">
    <text evidence="1">Fourteen ClpP subunits assemble into 2 heptameric rings which stack back to back to give a disk-like structure with a central cavity, resembling the structure of eukaryotic proteasomes.</text>
</comment>
<comment type="subcellular location">
    <subcellularLocation>
        <location evidence="1">Cytoplasm</location>
    </subcellularLocation>
</comment>
<comment type="similarity">
    <text evidence="1">Belongs to the peptidase S14 family.</text>
</comment>
<name>CLPP_AROAE</name>
<sequence>MNSAAPHGSSNWDPVGLGLVPMVVEQSGRGERAYDIYSRLLKERVIFLVGPVNDVTANLIVAQLLFLESENPDKDVYFYINSPGGSVSSGMAIYDTMQFIKPSVSTLCIGQAASMGSFLLAAGEKGKRFCLPNSRVMIHQPLGGFQGQASDIEIHAREILGIRAKLNEMLAKHTGQPIEQIEKDTDRDRFMSAADAVEYGIVDKVLTNRADS</sequence>
<protein>
    <recommendedName>
        <fullName evidence="1">ATP-dependent Clp protease proteolytic subunit</fullName>
        <ecNumber evidence="1">3.4.21.92</ecNumber>
    </recommendedName>
    <alternativeName>
        <fullName evidence="1">Endopeptidase Clp</fullName>
    </alternativeName>
</protein>
<organism>
    <name type="scientific">Aromatoleum aromaticum (strain DSM 19018 / LMG 30748 / EbN1)</name>
    <name type="common">Azoarcus sp. (strain EbN1)</name>
    <dbReference type="NCBI Taxonomy" id="76114"/>
    <lineage>
        <taxon>Bacteria</taxon>
        <taxon>Pseudomonadati</taxon>
        <taxon>Pseudomonadota</taxon>
        <taxon>Betaproteobacteria</taxon>
        <taxon>Rhodocyclales</taxon>
        <taxon>Rhodocyclaceae</taxon>
        <taxon>Aromatoleum</taxon>
    </lineage>
</organism>